<proteinExistence type="inferred from homology"/>
<evidence type="ECO:0000255" key="1">
    <source>
        <dbReference type="HAMAP-Rule" id="MF_00061"/>
    </source>
</evidence>
<dbReference type="EC" id="2.7.1.148" evidence="1"/>
<dbReference type="EMBL" id="AP010904">
    <property type="protein sequence ID" value="BAH76433.1"/>
    <property type="molecule type" value="Genomic_DNA"/>
</dbReference>
<dbReference type="RefSeq" id="WP_015861596.1">
    <property type="nucleotide sequence ID" value="NC_012796.1"/>
</dbReference>
<dbReference type="SMR" id="C4XHQ9"/>
<dbReference type="STRING" id="573370.DMR_29420"/>
<dbReference type="KEGG" id="dma:DMR_29420"/>
<dbReference type="eggNOG" id="COG1947">
    <property type="taxonomic scope" value="Bacteria"/>
</dbReference>
<dbReference type="HOGENOM" id="CLU_053057_1_1_7"/>
<dbReference type="OrthoDB" id="9809438at2"/>
<dbReference type="UniPathway" id="UPA00056">
    <property type="reaction ID" value="UER00094"/>
</dbReference>
<dbReference type="Proteomes" id="UP000009071">
    <property type="component" value="Chromosome"/>
</dbReference>
<dbReference type="GO" id="GO:0050515">
    <property type="term" value="F:4-(cytidine 5'-diphospho)-2-C-methyl-D-erythritol kinase activity"/>
    <property type="evidence" value="ECO:0007669"/>
    <property type="project" value="UniProtKB-UniRule"/>
</dbReference>
<dbReference type="GO" id="GO:0005524">
    <property type="term" value="F:ATP binding"/>
    <property type="evidence" value="ECO:0007669"/>
    <property type="project" value="UniProtKB-UniRule"/>
</dbReference>
<dbReference type="GO" id="GO:0019288">
    <property type="term" value="P:isopentenyl diphosphate biosynthetic process, methylerythritol 4-phosphate pathway"/>
    <property type="evidence" value="ECO:0007669"/>
    <property type="project" value="UniProtKB-UniRule"/>
</dbReference>
<dbReference type="GO" id="GO:0016114">
    <property type="term" value="P:terpenoid biosynthetic process"/>
    <property type="evidence" value="ECO:0007669"/>
    <property type="project" value="InterPro"/>
</dbReference>
<dbReference type="Gene3D" id="3.30.230.10">
    <property type="match status" value="1"/>
</dbReference>
<dbReference type="Gene3D" id="3.30.70.890">
    <property type="entry name" value="GHMP kinase, C-terminal domain"/>
    <property type="match status" value="1"/>
</dbReference>
<dbReference type="HAMAP" id="MF_00061">
    <property type="entry name" value="IspE"/>
    <property type="match status" value="1"/>
</dbReference>
<dbReference type="InterPro" id="IPR013750">
    <property type="entry name" value="GHMP_kinase_C_dom"/>
</dbReference>
<dbReference type="InterPro" id="IPR036554">
    <property type="entry name" value="GHMP_kinase_C_sf"/>
</dbReference>
<dbReference type="InterPro" id="IPR006204">
    <property type="entry name" value="GHMP_kinase_N_dom"/>
</dbReference>
<dbReference type="InterPro" id="IPR004424">
    <property type="entry name" value="IspE"/>
</dbReference>
<dbReference type="InterPro" id="IPR020568">
    <property type="entry name" value="Ribosomal_Su5_D2-typ_SF"/>
</dbReference>
<dbReference type="InterPro" id="IPR014721">
    <property type="entry name" value="Ribsml_uS5_D2-typ_fold_subgr"/>
</dbReference>
<dbReference type="NCBIfam" id="TIGR00154">
    <property type="entry name" value="ispE"/>
    <property type="match status" value="1"/>
</dbReference>
<dbReference type="PANTHER" id="PTHR43527">
    <property type="entry name" value="4-DIPHOSPHOCYTIDYL-2-C-METHYL-D-ERYTHRITOL KINASE, CHLOROPLASTIC"/>
    <property type="match status" value="1"/>
</dbReference>
<dbReference type="PANTHER" id="PTHR43527:SF2">
    <property type="entry name" value="4-DIPHOSPHOCYTIDYL-2-C-METHYL-D-ERYTHRITOL KINASE, CHLOROPLASTIC"/>
    <property type="match status" value="1"/>
</dbReference>
<dbReference type="Pfam" id="PF08544">
    <property type="entry name" value="GHMP_kinases_C"/>
    <property type="match status" value="1"/>
</dbReference>
<dbReference type="Pfam" id="PF00288">
    <property type="entry name" value="GHMP_kinases_N"/>
    <property type="match status" value="1"/>
</dbReference>
<dbReference type="PIRSF" id="PIRSF010376">
    <property type="entry name" value="IspE"/>
    <property type="match status" value="1"/>
</dbReference>
<dbReference type="SUPFAM" id="SSF55060">
    <property type="entry name" value="GHMP Kinase, C-terminal domain"/>
    <property type="match status" value="1"/>
</dbReference>
<dbReference type="SUPFAM" id="SSF54211">
    <property type="entry name" value="Ribosomal protein S5 domain 2-like"/>
    <property type="match status" value="1"/>
</dbReference>
<name>ISPE_SOLM1</name>
<sequence>MASFPCPIEETLLPVPCKVNLRLAVGARRPNGYHDIDTFFLPLPEPADVLRLRRFDGPGDIDLQCSDPELETDDNLVVRAYRAYAAATGYAPRLEVHLAKHIPHGAGLGGGSSDAAVMLRYLNDRADEAALSPVDLAALALTLGADIPFFLLGVPAVATGVGETLIPADPGLAGWCAVVVCPEARVKTAWAYAALDASRALPQKPGANLLTTAFDANKRAFCVTGAPMRNDFESVVFAAHPELGRVKERLLALGAAGALLSGTGSAVFGLFRKRQTATLALAMLTGSGPRAYLAPL</sequence>
<feature type="chain" id="PRO_1000202376" description="4-diphosphocytidyl-2-C-methyl-D-erythritol kinase">
    <location>
        <begin position="1"/>
        <end position="296"/>
    </location>
</feature>
<feature type="active site" evidence="1">
    <location>
        <position position="18"/>
    </location>
</feature>
<feature type="active site" evidence="1">
    <location>
        <position position="146"/>
    </location>
</feature>
<feature type="binding site" evidence="1">
    <location>
        <begin position="103"/>
        <end position="113"/>
    </location>
    <ligand>
        <name>ATP</name>
        <dbReference type="ChEBI" id="CHEBI:30616"/>
    </ligand>
</feature>
<gene>
    <name evidence="1" type="primary">ispE</name>
    <name type="ordered locus">DMR_29420</name>
</gene>
<reference key="1">
    <citation type="journal article" date="2009" name="Genome Res.">
        <title>Whole genome sequence of Desulfovibrio magneticus strain RS-1 revealed common gene clusters in magnetotactic bacteria.</title>
        <authorList>
            <person name="Nakazawa H."/>
            <person name="Arakaki A."/>
            <person name="Narita-Yamada S."/>
            <person name="Yashiro I."/>
            <person name="Jinno K."/>
            <person name="Aoki N."/>
            <person name="Tsuruyama A."/>
            <person name="Okamura Y."/>
            <person name="Tanikawa S."/>
            <person name="Fujita N."/>
            <person name="Takeyama H."/>
            <person name="Matsunaga T."/>
        </authorList>
    </citation>
    <scope>NUCLEOTIDE SEQUENCE [LARGE SCALE GENOMIC DNA]</scope>
    <source>
        <strain>ATCC 700980 / DSM 13731 / RS-1</strain>
    </source>
</reference>
<protein>
    <recommendedName>
        <fullName evidence="1">4-diphosphocytidyl-2-C-methyl-D-erythritol kinase</fullName>
        <shortName evidence="1">CMK</shortName>
        <ecNumber evidence="1">2.7.1.148</ecNumber>
    </recommendedName>
    <alternativeName>
        <fullName evidence="1">4-(cytidine-5'-diphospho)-2-C-methyl-D-erythritol kinase</fullName>
    </alternativeName>
</protein>
<comment type="function">
    <text evidence="1">Catalyzes the phosphorylation of the position 2 hydroxy group of 4-diphosphocytidyl-2C-methyl-D-erythritol.</text>
</comment>
<comment type="catalytic activity">
    <reaction evidence="1">
        <text>4-CDP-2-C-methyl-D-erythritol + ATP = 4-CDP-2-C-methyl-D-erythritol 2-phosphate + ADP + H(+)</text>
        <dbReference type="Rhea" id="RHEA:18437"/>
        <dbReference type="ChEBI" id="CHEBI:15378"/>
        <dbReference type="ChEBI" id="CHEBI:30616"/>
        <dbReference type="ChEBI" id="CHEBI:57823"/>
        <dbReference type="ChEBI" id="CHEBI:57919"/>
        <dbReference type="ChEBI" id="CHEBI:456216"/>
        <dbReference type="EC" id="2.7.1.148"/>
    </reaction>
</comment>
<comment type="pathway">
    <text evidence="1">Isoprenoid biosynthesis; isopentenyl diphosphate biosynthesis via DXP pathway; isopentenyl diphosphate from 1-deoxy-D-xylulose 5-phosphate: step 3/6.</text>
</comment>
<comment type="similarity">
    <text evidence="1">Belongs to the GHMP kinase family. IspE subfamily.</text>
</comment>
<accession>C4XHQ9</accession>
<organism>
    <name type="scientific">Solidesulfovibrio magneticus (strain ATCC 700980 / DSM 13731 / RS-1)</name>
    <name type="common">Desulfovibrio magneticus</name>
    <dbReference type="NCBI Taxonomy" id="573370"/>
    <lineage>
        <taxon>Bacteria</taxon>
        <taxon>Pseudomonadati</taxon>
        <taxon>Thermodesulfobacteriota</taxon>
        <taxon>Desulfovibrionia</taxon>
        <taxon>Desulfovibrionales</taxon>
        <taxon>Desulfovibrionaceae</taxon>
        <taxon>Solidesulfovibrio</taxon>
    </lineage>
</organism>
<keyword id="KW-0067">ATP-binding</keyword>
<keyword id="KW-0414">Isoprene biosynthesis</keyword>
<keyword id="KW-0418">Kinase</keyword>
<keyword id="KW-0547">Nucleotide-binding</keyword>
<keyword id="KW-0808">Transferase</keyword>